<reference key="1">
    <citation type="journal article" date="2005" name="PLoS Biol.">
        <title>Major structural differences and novel potential virulence mechanisms from the genomes of multiple Campylobacter species.</title>
        <authorList>
            <person name="Fouts D.E."/>
            <person name="Mongodin E.F."/>
            <person name="Mandrell R.E."/>
            <person name="Miller W.G."/>
            <person name="Rasko D.A."/>
            <person name="Ravel J."/>
            <person name="Brinkac L.M."/>
            <person name="DeBoy R.T."/>
            <person name="Parker C.T."/>
            <person name="Daugherty S.C."/>
            <person name="Dodson R.J."/>
            <person name="Durkin A.S."/>
            <person name="Madupu R."/>
            <person name="Sullivan S.A."/>
            <person name="Shetty J.U."/>
            <person name="Ayodeji M.A."/>
            <person name="Shvartsbeyn A."/>
            <person name="Schatz M.C."/>
            <person name="Badger J.H."/>
            <person name="Fraser C.M."/>
            <person name="Nelson K.E."/>
        </authorList>
    </citation>
    <scope>NUCLEOTIDE SEQUENCE [LARGE SCALE GENOMIC DNA]</scope>
    <source>
        <strain>RM1221</strain>
    </source>
</reference>
<keyword id="KW-0963">Cytoplasm</keyword>
<keyword id="KW-0324">Glycolysis</keyword>
<keyword id="KW-0456">Lyase</keyword>
<keyword id="KW-0460">Magnesium</keyword>
<keyword id="KW-0479">Metal-binding</keyword>
<keyword id="KW-0964">Secreted</keyword>
<gene>
    <name evidence="1" type="primary">eno</name>
    <name type="ordered locus">CJE1844</name>
</gene>
<protein>
    <recommendedName>
        <fullName evidence="1">Enolase</fullName>
        <ecNumber evidence="1">4.2.1.11</ecNumber>
    </recommendedName>
    <alternativeName>
        <fullName evidence="1">2-phospho-D-glycerate hydro-lyase</fullName>
    </alternativeName>
    <alternativeName>
        <fullName evidence="1">2-phosphoglycerate dehydratase</fullName>
    </alternativeName>
</protein>
<accession>Q5HSC1</accession>
<proteinExistence type="inferred from homology"/>
<feature type="chain" id="PRO_0000133862" description="Enolase">
    <location>
        <begin position="1"/>
        <end position="414"/>
    </location>
</feature>
<feature type="active site" description="Proton donor" evidence="1">
    <location>
        <position position="204"/>
    </location>
</feature>
<feature type="active site" description="Proton acceptor" evidence="1">
    <location>
        <position position="332"/>
    </location>
</feature>
<feature type="binding site" evidence="1">
    <location>
        <position position="162"/>
    </location>
    <ligand>
        <name>(2R)-2-phosphoglycerate</name>
        <dbReference type="ChEBI" id="CHEBI:58289"/>
    </ligand>
</feature>
<feature type="binding site" evidence="1">
    <location>
        <position position="239"/>
    </location>
    <ligand>
        <name>Mg(2+)</name>
        <dbReference type="ChEBI" id="CHEBI:18420"/>
    </ligand>
</feature>
<feature type="binding site" evidence="1">
    <location>
        <position position="280"/>
    </location>
    <ligand>
        <name>Mg(2+)</name>
        <dbReference type="ChEBI" id="CHEBI:18420"/>
    </ligand>
</feature>
<feature type="binding site" evidence="1">
    <location>
        <position position="307"/>
    </location>
    <ligand>
        <name>Mg(2+)</name>
        <dbReference type="ChEBI" id="CHEBI:18420"/>
    </ligand>
</feature>
<feature type="binding site" evidence="1">
    <location>
        <position position="332"/>
    </location>
    <ligand>
        <name>(2R)-2-phosphoglycerate</name>
        <dbReference type="ChEBI" id="CHEBI:58289"/>
    </ligand>
</feature>
<feature type="binding site" evidence="1">
    <location>
        <position position="361"/>
    </location>
    <ligand>
        <name>(2R)-2-phosphoglycerate</name>
        <dbReference type="ChEBI" id="CHEBI:58289"/>
    </ligand>
</feature>
<feature type="binding site" evidence="1">
    <location>
        <position position="362"/>
    </location>
    <ligand>
        <name>(2R)-2-phosphoglycerate</name>
        <dbReference type="ChEBI" id="CHEBI:58289"/>
    </ligand>
</feature>
<feature type="binding site" evidence="1">
    <location>
        <position position="383"/>
    </location>
    <ligand>
        <name>(2R)-2-phosphoglycerate</name>
        <dbReference type="ChEBI" id="CHEBI:58289"/>
    </ligand>
</feature>
<comment type="function">
    <text evidence="1">Catalyzes the reversible conversion of 2-phosphoglycerate (2-PG) into phosphoenolpyruvate (PEP). It is essential for the degradation of carbohydrates via glycolysis.</text>
</comment>
<comment type="catalytic activity">
    <reaction evidence="1">
        <text>(2R)-2-phosphoglycerate = phosphoenolpyruvate + H2O</text>
        <dbReference type="Rhea" id="RHEA:10164"/>
        <dbReference type="ChEBI" id="CHEBI:15377"/>
        <dbReference type="ChEBI" id="CHEBI:58289"/>
        <dbReference type="ChEBI" id="CHEBI:58702"/>
        <dbReference type="EC" id="4.2.1.11"/>
    </reaction>
</comment>
<comment type="cofactor">
    <cofactor evidence="1">
        <name>Mg(2+)</name>
        <dbReference type="ChEBI" id="CHEBI:18420"/>
    </cofactor>
    <text evidence="1">Binds a second Mg(2+) ion via substrate during catalysis.</text>
</comment>
<comment type="pathway">
    <text evidence="1">Carbohydrate degradation; glycolysis; pyruvate from D-glyceraldehyde 3-phosphate: step 4/5.</text>
</comment>
<comment type="subcellular location">
    <subcellularLocation>
        <location evidence="1">Cytoplasm</location>
    </subcellularLocation>
    <subcellularLocation>
        <location evidence="1">Secreted</location>
    </subcellularLocation>
    <subcellularLocation>
        <location evidence="1">Cell surface</location>
    </subcellularLocation>
    <text evidence="1">Fractions of enolase are present in both the cytoplasm and on the cell surface.</text>
</comment>
<comment type="similarity">
    <text evidence="1">Belongs to the enolase family.</text>
</comment>
<sequence>MLVIEDVRAYEVLDSRGNPTVKAEVTLSDGSVGAAIVPSGASTGSKEALELRDNDERFGGKGVLKAVANVNETIADEILGLDAFNQTQLDDTLRELDGTNNYSNLGANATLGVSMATARAAAAALGMPLYRYLGGANASILPVPMCNIINGGAHANNNVDFQEFMIMPFGFTSFKEALRSVCEIYVILKKELANSGHSTALGDEGGFAPNLANNTEPIDLLMTCIKKAGYENRVKIALDVASTEFFKDGKYHMEGKAFSSEDLIERYVELCAKYPICSIEDGLAENDFEGWIKLTEKLGNKIQLVGDDLFVTNEDILREGIIKKMANAVLIKPNQIGTITQTMRTVRLAQRNNYKCVMSHRSGESEDAFIADFAVALNTGQIKTGALARGERTAKYNRLLEIELESDEYLGEKL</sequence>
<name>ENO_CAMJR</name>
<dbReference type="EC" id="4.2.1.11" evidence="1"/>
<dbReference type="EMBL" id="CP000025">
    <property type="protein sequence ID" value="AAW36266.1"/>
    <property type="molecule type" value="Genomic_DNA"/>
</dbReference>
<dbReference type="RefSeq" id="WP_002867528.1">
    <property type="nucleotide sequence ID" value="NC_003912.7"/>
</dbReference>
<dbReference type="SMR" id="Q5HSC1"/>
<dbReference type="KEGG" id="cjr:CJE1844"/>
<dbReference type="HOGENOM" id="CLU_031223_2_1_7"/>
<dbReference type="UniPathway" id="UPA00109">
    <property type="reaction ID" value="UER00187"/>
</dbReference>
<dbReference type="GO" id="GO:0009986">
    <property type="term" value="C:cell surface"/>
    <property type="evidence" value="ECO:0007669"/>
    <property type="project" value="UniProtKB-SubCell"/>
</dbReference>
<dbReference type="GO" id="GO:0005576">
    <property type="term" value="C:extracellular region"/>
    <property type="evidence" value="ECO:0007669"/>
    <property type="project" value="UniProtKB-SubCell"/>
</dbReference>
<dbReference type="GO" id="GO:0000015">
    <property type="term" value="C:phosphopyruvate hydratase complex"/>
    <property type="evidence" value="ECO:0007669"/>
    <property type="project" value="InterPro"/>
</dbReference>
<dbReference type="GO" id="GO:0000287">
    <property type="term" value="F:magnesium ion binding"/>
    <property type="evidence" value="ECO:0007669"/>
    <property type="project" value="UniProtKB-UniRule"/>
</dbReference>
<dbReference type="GO" id="GO:0004634">
    <property type="term" value="F:phosphopyruvate hydratase activity"/>
    <property type="evidence" value="ECO:0007669"/>
    <property type="project" value="UniProtKB-UniRule"/>
</dbReference>
<dbReference type="GO" id="GO:0006096">
    <property type="term" value="P:glycolytic process"/>
    <property type="evidence" value="ECO:0007669"/>
    <property type="project" value="UniProtKB-UniRule"/>
</dbReference>
<dbReference type="CDD" id="cd03313">
    <property type="entry name" value="enolase"/>
    <property type="match status" value="1"/>
</dbReference>
<dbReference type="Gene3D" id="3.20.20.120">
    <property type="entry name" value="Enolase-like C-terminal domain"/>
    <property type="match status" value="1"/>
</dbReference>
<dbReference type="Gene3D" id="3.30.390.10">
    <property type="entry name" value="Enolase-like, N-terminal domain"/>
    <property type="match status" value="1"/>
</dbReference>
<dbReference type="HAMAP" id="MF_00318">
    <property type="entry name" value="Enolase"/>
    <property type="match status" value="1"/>
</dbReference>
<dbReference type="InterPro" id="IPR000941">
    <property type="entry name" value="Enolase"/>
</dbReference>
<dbReference type="InterPro" id="IPR036849">
    <property type="entry name" value="Enolase-like_C_sf"/>
</dbReference>
<dbReference type="InterPro" id="IPR029017">
    <property type="entry name" value="Enolase-like_N"/>
</dbReference>
<dbReference type="InterPro" id="IPR020810">
    <property type="entry name" value="Enolase_C"/>
</dbReference>
<dbReference type="InterPro" id="IPR020809">
    <property type="entry name" value="Enolase_CS"/>
</dbReference>
<dbReference type="InterPro" id="IPR020811">
    <property type="entry name" value="Enolase_N"/>
</dbReference>
<dbReference type="NCBIfam" id="TIGR01060">
    <property type="entry name" value="eno"/>
    <property type="match status" value="1"/>
</dbReference>
<dbReference type="PANTHER" id="PTHR11902">
    <property type="entry name" value="ENOLASE"/>
    <property type="match status" value="1"/>
</dbReference>
<dbReference type="PANTHER" id="PTHR11902:SF1">
    <property type="entry name" value="ENOLASE"/>
    <property type="match status" value="1"/>
</dbReference>
<dbReference type="Pfam" id="PF00113">
    <property type="entry name" value="Enolase_C"/>
    <property type="match status" value="1"/>
</dbReference>
<dbReference type="Pfam" id="PF03952">
    <property type="entry name" value="Enolase_N"/>
    <property type="match status" value="1"/>
</dbReference>
<dbReference type="PIRSF" id="PIRSF001400">
    <property type="entry name" value="Enolase"/>
    <property type="match status" value="1"/>
</dbReference>
<dbReference type="PRINTS" id="PR00148">
    <property type="entry name" value="ENOLASE"/>
</dbReference>
<dbReference type="SFLD" id="SFLDS00001">
    <property type="entry name" value="Enolase"/>
    <property type="match status" value="1"/>
</dbReference>
<dbReference type="SFLD" id="SFLDF00002">
    <property type="entry name" value="enolase"/>
    <property type="match status" value="1"/>
</dbReference>
<dbReference type="SMART" id="SM01192">
    <property type="entry name" value="Enolase_C"/>
    <property type="match status" value="1"/>
</dbReference>
<dbReference type="SMART" id="SM01193">
    <property type="entry name" value="Enolase_N"/>
    <property type="match status" value="1"/>
</dbReference>
<dbReference type="SUPFAM" id="SSF51604">
    <property type="entry name" value="Enolase C-terminal domain-like"/>
    <property type="match status" value="1"/>
</dbReference>
<dbReference type="SUPFAM" id="SSF54826">
    <property type="entry name" value="Enolase N-terminal domain-like"/>
    <property type="match status" value="1"/>
</dbReference>
<dbReference type="PROSITE" id="PS00164">
    <property type="entry name" value="ENOLASE"/>
    <property type="match status" value="1"/>
</dbReference>
<evidence type="ECO:0000255" key="1">
    <source>
        <dbReference type="HAMAP-Rule" id="MF_00318"/>
    </source>
</evidence>
<organism>
    <name type="scientific">Campylobacter jejuni (strain RM1221)</name>
    <dbReference type="NCBI Taxonomy" id="195099"/>
    <lineage>
        <taxon>Bacteria</taxon>
        <taxon>Pseudomonadati</taxon>
        <taxon>Campylobacterota</taxon>
        <taxon>Epsilonproteobacteria</taxon>
        <taxon>Campylobacterales</taxon>
        <taxon>Campylobacteraceae</taxon>
        <taxon>Campylobacter</taxon>
    </lineage>
</organism>